<proteinExistence type="inferred from homology"/>
<sequence>MSRVGKSPIALQGAEVKLADGAITVKGPLGTITQAINPLVNVANNDGTLNLSPVDESREANALSGTMRAIIANAVHGVTKGFERKLTLVGVGYRAQAQGDKLNLSLGFSHPVVHQMPEGVKAETPTQTEIVIKGINKQQVGQVAAEVRGYRPPEPYKGKGVRYADEVVILKETKKK</sequence>
<comment type="function">
    <text evidence="1">This protein binds to the 23S rRNA, and is important in its secondary structure. It is located near the subunit interface in the base of the L7/L12 stalk, and near the tRNA binding site of the peptidyltransferase center.</text>
</comment>
<comment type="subunit">
    <text evidence="1">Part of the 50S ribosomal subunit.</text>
</comment>
<comment type="similarity">
    <text evidence="1">Belongs to the universal ribosomal protein uL6 family.</text>
</comment>
<accession>Q1BRW3</accession>
<protein>
    <recommendedName>
        <fullName evidence="1">Large ribosomal subunit protein uL6</fullName>
    </recommendedName>
    <alternativeName>
        <fullName evidence="2">50S ribosomal protein L6</fullName>
    </alternativeName>
</protein>
<evidence type="ECO:0000255" key="1">
    <source>
        <dbReference type="HAMAP-Rule" id="MF_01365"/>
    </source>
</evidence>
<evidence type="ECO:0000305" key="2"/>
<organism>
    <name type="scientific">Burkholderia orbicola (strain AU 1054)</name>
    <dbReference type="NCBI Taxonomy" id="331271"/>
    <lineage>
        <taxon>Bacteria</taxon>
        <taxon>Pseudomonadati</taxon>
        <taxon>Pseudomonadota</taxon>
        <taxon>Betaproteobacteria</taxon>
        <taxon>Burkholderiales</taxon>
        <taxon>Burkholderiaceae</taxon>
        <taxon>Burkholderia</taxon>
        <taxon>Burkholderia cepacia complex</taxon>
        <taxon>Burkholderia orbicola</taxon>
    </lineage>
</organism>
<dbReference type="EMBL" id="CP000378">
    <property type="protein sequence ID" value="ABF77642.1"/>
    <property type="molecule type" value="Genomic_DNA"/>
</dbReference>
<dbReference type="SMR" id="Q1BRW3"/>
<dbReference type="HOGENOM" id="CLU_065464_1_2_4"/>
<dbReference type="GO" id="GO:0022625">
    <property type="term" value="C:cytosolic large ribosomal subunit"/>
    <property type="evidence" value="ECO:0007669"/>
    <property type="project" value="TreeGrafter"/>
</dbReference>
<dbReference type="GO" id="GO:0019843">
    <property type="term" value="F:rRNA binding"/>
    <property type="evidence" value="ECO:0007669"/>
    <property type="project" value="UniProtKB-UniRule"/>
</dbReference>
<dbReference type="GO" id="GO:0003735">
    <property type="term" value="F:structural constituent of ribosome"/>
    <property type="evidence" value="ECO:0007669"/>
    <property type="project" value="InterPro"/>
</dbReference>
<dbReference type="GO" id="GO:0002181">
    <property type="term" value="P:cytoplasmic translation"/>
    <property type="evidence" value="ECO:0007669"/>
    <property type="project" value="TreeGrafter"/>
</dbReference>
<dbReference type="FunFam" id="3.90.930.12:FF:000001">
    <property type="entry name" value="50S ribosomal protein L6"/>
    <property type="match status" value="1"/>
</dbReference>
<dbReference type="Gene3D" id="3.90.930.12">
    <property type="entry name" value="Ribosomal protein L6, alpha-beta domain"/>
    <property type="match status" value="2"/>
</dbReference>
<dbReference type="HAMAP" id="MF_01365_B">
    <property type="entry name" value="Ribosomal_uL6_B"/>
    <property type="match status" value="1"/>
</dbReference>
<dbReference type="InterPro" id="IPR000702">
    <property type="entry name" value="Ribosomal_uL6-like"/>
</dbReference>
<dbReference type="InterPro" id="IPR036789">
    <property type="entry name" value="Ribosomal_uL6-like_a/b-dom_sf"/>
</dbReference>
<dbReference type="InterPro" id="IPR020040">
    <property type="entry name" value="Ribosomal_uL6_a/b-dom"/>
</dbReference>
<dbReference type="InterPro" id="IPR019906">
    <property type="entry name" value="Ribosomal_uL6_bac-type"/>
</dbReference>
<dbReference type="InterPro" id="IPR002358">
    <property type="entry name" value="Ribosomal_uL6_CS"/>
</dbReference>
<dbReference type="NCBIfam" id="TIGR03654">
    <property type="entry name" value="L6_bact"/>
    <property type="match status" value="1"/>
</dbReference>
<dbReference type="PANTHER" id="PTHR11655">
    <property type="entry name" value="60S/50S RIBOSOMAL PROTEIN L6/L9"/>
    <property type="match status" value="1"/>
</dbReference>
<dbReference type="PANTHER" id="PTHR11655:SF14">
    <property type="entry name" value="LARGE RIBOSOMAL SUBUNIT PROTEIN UL6M"/>
    <property type="match status" value="1"/>
</dbReference>
<dbReference type="Pfam" id="PF00347">
    <property type="entry name" value="Ribosomal_L6"/>
    <property type="match status" value="2"/>
</dbReference>
<dbReference type="PIRSF" id="PIRSF002162">
    <property type="entry name" value="Ribosomal_L6"/>
    <property type="match status" value="1"/>
</dbReference>
<dbReference type="PRINTS" id="PR00059">
    <property type="entry name" value="RIBOSOMALL6"/>
</dbReference>
<dbReference type="SUPFAM" id="SSF56053">
    <property type="entry name" value="Ribosomal protein L6"/>
    <property type="match status" value="2"/>
</dbReference>
<dbReference type="PROSITE" id="PS00525">
    <property type="entry name" value="RIBOSOMAL_L6_1"/>
    <property type="match status" value="1"/>
</dbReference>
<name>RL6_BURO1</name>
<reference key="1">
    <citation type="submission" date="2006-05" db="EMBL/GenBank/DDBJ databases">
        <title>Complete sequence of chromosome 1 of Burkholderia cenocepacia AU 1054.</title>
        <authorList>
            <consortium name="US DOE Joint Genome Institute"/>
            <person name="Copeland A."/>
            <person name="Lucas S."/>
            <person name="Lapidus A."/>
            <person name="Barry K."/>
            <person name="Detter J.C."/>
            <person name="Glavina del Rio T."/>
            <person name="Hammon N."/>
            <person name="Israni S."/>
            <person name="Dalin E."/>
            <person name="Tice H."/>
            <person name="Pitluck S."/>
            <person name="Chain P."/>
            <person name="Malfatti S."/>
            <person name="Shin M."/>
            <person name="Vergez L."/>
            <person name="Schmutz J."/>
            <person name="Larimer F."/>
            <person name="Land M."/>
            <person name="Hauser L."/>
            <person name="Kyrpides N."/>
            <person name="Lykidis A."/>
            <person name="LiPuma J.J."/>
            <person name="Konstantinidis K."/>
            <person name="Tiedje J.M."/>
            <person name="Richardson P."/>
        </authorList>
    </citation>
    <scope>NUCLEOTIDE SEQUENCE [LARGE SCALE GENOMIC DNA]</scope>
    <source>
        <strain>AU 1054</strain>
    </source>
</reference>
<keyword id="KW-0687">Ribonucleoprotein</keyword>
<keyword id="KW-0689">Ribosomal protein</keyword>
<keyword id="KW-0694">RNA-binding</keyword>
<keyword id="KW-0699">rRNA-binding</keyword>
<gene>
    <name evidence="1" type="primary">rplF</name>
    <name type="ordered locus">Bcen_2744</name>
</gene>
<feature type="chain" id="PRO_0000265230" description="Large ribosomal subunit protein uL6">
    <location>
        <begin position="1"/>
        <end position="176"/>
    </location>
</feature>